<organism>
    <name type="scientific">Azorhizobium caulinodans (strain ATCC 43989 / DSM 5975 / JCM 20966 / LMG 6465 / NBRC 14845 / NCIMB 13405 / ORS 571)</name>
    <dbReference type="NCBI Taxonomy" id="438753"/>
    <lineage>
        <taxon>Bacteria</taxon>
        <taxon>Pseudomonadati</taxon>
        <taxon>Pseudomonadota</taxon>
        <taxon>Alphaproteobacteria</taxon>
        <taxon>Hyphomicrobiales</taxon>
        <taxon>Xanthobacteraceae</taxon>
        <taxon>Azorhizobium</taxon>
    </lineage>
</organism>
<protein>
    <recommendedName>
        <fullName evidence="1">Small ribosomal subunit protein uS7</fullName>
    </recommendedName>
    <alternativeName>
        <fullName evidence="2">30S ribosomal protein S7</fullName>
    </alternativeName>
</protein>
<keyword id="KW-1185">Reference proteome</keyword>
<keyword id="KW-0687">Ribonucleoprotein</keyword>
<keyword id="KW-0689">Ribosomal protein</keyword>
<keyword id="KW-0694">RNA-binding</keyword>
<keyword id="KW-0699">rRNA-binding</keyword>
<keyword id="KW-0820">tRNA-binding</keyword>
<comment type="function">
    <text evidence="1">One of the primary rRNA binding proteins, it binds directly to 16S rRNA where it nucleates assembly of the head domain of the 30S subunit. Is located at the subunit interface close to the decoding center, probably blocks exit of the E-site tRNA.</text>
</comment>
<comment type="subunit">
    <text evidence="1">Part of the 30S ribosomal subunit. Contacts proteins S9 and S11.</text>
</comment>
<comment type="similarity">
    <text evidence="1">Belongs to the universal ribosomal protein uS7 family.</text>
</comment>
<dbReference type="EMBL" id="AP009384">
    <property type="protein sequence ID" value="BAF88556.1"/>
    <property type="molecule type" value="Genomic_DNA"/>
</dbReference>
<dbReference type="RefSeq" id="WP_012171082.1">
    <property type="nucleotide sequence ID" value="NC_009937.1"/>
</dbReference>
<dbReference type="SMR" id="A8IAT5"/>
<dbReference type="STRING" id="438753.AZC_2558"/>
<dbReference type="KEGG" id="azc:AZC_2558"/>
<dbReference type="eggNOG" id="COG0049">
    <property type="taxonomic scope" value="Bacteria"/>
</dbReference>
<dbReference type="HOGENOM" id="CLU_072226_1_1_5"/>
<dbReference type="Proteomes" id="UP000000270">
    <property type="component" value="Chromosome"/>
</dbReference>
<dbReference type="GO" id="GO:0015935">
    <property type="term" value="C:small ribosomal subunit"/>
    <property type="evidence" value="ECO:0007669"/>
    <property type="project" value="InterPro"/>
</dbReference>
<dbReference type="GO" id="GO:0019843">
    <property type="term" value="F:rRNA binding"/>
    <property type="evidence" value="ECO:0007669"/>
    <property type="project" value="UniProtKB-UniRule"/>
</dbReference>
<dbReference type="GO" id="GO:0003735">
    <property type="term" value="F:structural constituent of ribosome"/>
    <property type="evidence" value="ECO:0007669"/>
    <property type="project" value="InterPro"/>
</dbReference>
<dbReference type="GO" id="GO:0000049">
    <property type="term" value="F:tRNA binding"/>
    <property type="evidence" value="ECO:0007669"/>
    <property type="project" value="UniProtKB-UniRule"/>
</dbReference>
<dbReference type="GO" id="GO:0006412">
    <property type="term" value="P:translation"/>
    <property type="evidence" value="ECO:0007669"/>
    <property type="project" value="UniProtKB-UniRule"/>
</dbReference>
<dbReference type="CDD" id="cd14869">
    <property type="entry name" value="uS7_Bacteria"/>
    <property type="match status" value="1"/>
</dbReference>
<dbReference type="FunFam" id="1.10.455.10:FF:000001">
    <property type="entry name" value="30S ribosomal protein S7"/>
    <property type="match status" value="1"/>
</dbReference>
<dbReference type="Gene3D" id="1.10.455.10">
    <property type="entry name" value="Ribosomal protein S7 domain"/>
    <property type="match status" value="1"/>
</dbReference>
<dbReference type="HAMAP" id="MF_00480_B">
    <property type="entry name" value="Ribosomal_uS7_B"/>
    <property type="match status" value="1"/>
</dbReference>
<dbReference type="InterPro" id="IPR000235">
    <property type="entry name" value="Ribosomal_uS7"/>
</dbReference>
<dbReference type="InterPro" id="IPR005717">
    <property type="entry name" value="Ribosomal_uS7_bac/org-type"/>
</dbReference>
<dbReference type="InterPro" id="IPR020606">
    <property type="entry name" value="Ribosomal_uS7_CS"/>
</dbReference>
<dbReference type="InterPro" id="IPR023798">
    <property type="entry name" value="Ribosomal_uS7_dom"/>
</dbReference>
<dbReference type="InterPro" id="IPR036823">
    <property type="entry name" value="Ribosomal_uS7_dom_sf"/>
</dbReference>
<dbReference type="NCBIfam" id="TIGR01029">
    <property type="entry name" value="rpsG_bact"/>
    <property type="match status" value="1"/>
</dbReference>
<dbReference type="PANTHER" id="PTHR11205">
    <property type="entry name" value="RIBOSOMAL PROTEIN S7"/>
    <property type="match status" value="1"/>
</dbReference>
<dbReference type="Pfam" id="PF00177">
    <property type="entry name" value="Ribosomal_S7"/>
    <property type="match status" value="1"/>
</dbReference>
<dbReference type="PIRSF" id="PIRSF002122">
    <property type="entry name" value="RPS7p_RPS7a_RPS5e_RPS7o"/>
    <property type="match status" value="1"/>
</dbReference>
<dbReference type="SUPFAM" id="SSF47973">
    <property type="entry name" value="Ribosomal protein S7"/>
    <property type="match status" value="1"/>
</dbReference>
<dbReference type="PROSITE" id="PS00052">
    <property type="entry name" value="RIBOSOMAL_S7"/>
    <property type="match status" value="1"/>
</dbReference>
<reference key="1">
    <citation type="submission" date="2007-04" db="EMBL/GenBank/DDBJ databases">
        <title>Complete genome sequence of the nitrogen-fixing bacterium Azorhizobium caulinodans ORS571.</title>
        <authorList>
            <person name="Lee K.B."/>
            <person name="Backer P.D."/>
            <person name="Aono T."/>
            <person name="Liu C.T."/>
            <person name="Suzuki S."/>
            <person name="Suzuki T."/>
            <person name="Kaneko T."/>
            <person name="Yamada M."/>
            <person name="Tabata S."/>
            <person name="Kupfer D.M."/>
            <person name="Najar F.Z."/>
            <person name="Wiley G.B."/>
            <person name="Roe B."/>
            <person name="Binnewies T."/>
            <person name="Ussery D."/>
            <person name="Vereecke D."/>
            <person name="Gevers D."/>
            <person name="Holsters M."/>
            <person name="Oyaizu H."/>
        </authorList>
    </citation>
    <scope>NUCLEOTIDE SEQUENCE [LARGE SCALE GENOMIC DNA]</scope>
    <source>
        <strain>ATCC 43989 / DSM 5975 / JCM 20966 / LMG 6465 / NBRC 14845 / NCIMB 13405 / ORS 571</strain>
    </source>
</reference>
<gene>
    <name evidence="1" type="primary">rpsG</name>
    <name type="ordered locus">AZC_2558</name>
</gene>
<proteinExistence type="inferred from homology"/>
<feature type="chain" id="PRO_1000072403" description="Small ribosomal subunit protein uS7">
    <location>
        <begin position="1"/>
        <end position="156"/>
    </location>
</feature>
<name>RS7_AZOC5</name>
<evidence type="ECO:0000255" key="1">
    <source>
        <dbReference type="HAMAP-Rule" id="MF_00480"/>
    </source>
</evidence>
<evidence type="ECO:0000305" key="2"/>
<accession>A8IAT5</accession>
<sequence length="156" mass="17719">MSRRHKAERREVIPDAKFGNIIVSRFMNSIMRDGKKSVAESIVYGALDVVEAKAKSNPLDLFVTALENVAPAVEVRSRRVGGATYQVPVEVRTERRQTLAIRWLIASARARNEKTMVERLSAELLDAANNRGNAVKKREDTHRMAEANRAFSHYRW</sequence>